<dbReference type="EC" id="7.5.2.7" evidence="1"/>
<dbReference type="EMBL" id="CR378679">
    <property type="protein sequence ID" value="CAG23419.1"/>
    <property type="molecule type" value="Genomic_DNA"/>
</dbReference>
<dbReference type="RefSeq" id="WP_011221577.1">
    <property type="nucleotide sequence ID" value="NC_006371.1"/>
</dbReference>
<dbReference type="SMR" id="Q6LH11"/>
<dbReference type="STRING" id="298386.PBPRB1557"/>
<dbReference type="KEGG" id="ppr:PBPRB1557"/>
<dbReference type="eggNOG" id="COG1129">
    <property type="taxonomic scope" value="Bacteria"/>
</dbReference>
<dbReference type="HOGENOM" id="CLU_000604_92_3_6"/>
<dbReference type="Proteomes" id="UP000000593">
    <property type="component" value="Chromosome 2"/>
</dbReference>
<dbReference type="GO" id="GO:0005886">
    <property type="term" value="C:plasma membrane"/>
    <property type="evidence" value="ECO:0007669"/>
    <property type="project" value="UniProtKB-SubCell"/>
</dbReference>
<dbReference type="GO" id="GO:0015611">
    <property type="term" value="F:ABC-type D-ribose transporter activity"/>
    <property type="evidence" value="ECO:0007669"/>
    <property type="project" value="UniProtKB-EC"/>
</dbReference>
<dbReference type="GO" id="GO:0005524">
    <property type="term" value="F:ATP binding"/>
    <property type="evidence" value="ECO:0007669"/>
    <property type="project" value="UniProtKB-KW"/>
</dbReference>
<dbReference type="GO" id="GO:0016887">
    <property type="term" value="F:ATP hydrolysis activity"/>
    <property type="evidence" value="ECO:0007669"/>
    <property type="project" value="InterPro"/>
</dbReference>
<dbReference type="CDD" id="cd03216">
    <property type="entry name" value="ABC_Carb_Monos_I"/>
    <property type="match status" value="1"/>
</dbReference>
<dbReference type="CDD" id="cd03215">
    <property type="entry name" value="ABC_Carb_Monos_II"/>
    <property type="match status" value="1"/>
</dbReference>
<dbReference type="FunFam" id="3.40.50.300:FF:000126">
    <property type="entry name" value="Galactose/methyl galactoside import ATP-binding protein MglA"/>
    <property type="match status" value="1"/>
</dbReference>
<dbReference type="FunFam" id="3.40.50.300:FF:000127">
    <property type="entry name" value="Ribose import ATP-binding protein RbsA"/>
    <property type="match status" value="1"/>
</dbReference>
<dbReference type="Gene3D" id="3.40.50.300">
    <property type="entry name" value="P-loop containing nucleotide triphosphate hydrolases"/>
    <property type="match status" value="2"/>
</dbReference>
<dbReference type="InterPro" id="IPR003593">
    <property type="entry name" value="AAA+_ATPase"/>
</dbReference>
<dbReference type="InterPro" id="IPR050107">
    <property type="entry name" value="ABC_carbohydrate_import_ATPase"/>
</dbReference>
<dbReference type="InterPro" id="IPR003439">
    <property type="entry name" value="ABC_transporter-like_ATP-bd"/>
</dbReference>
<dbReference type="InterPro" id="IPR017871">
    <property type="entry name" value="ABC_transporter-like_CS"/>
</dbReference>
<dbReference type="InterPro" id="IPR027417">
    <property type="entry name" value="P-loop_NTPase"/>
</dbReference>
<dbReference type="NCBIfam" id="NF008030">
    <property type="entry name" value="PRK10762.1"/>
    <property type="match status" value="1"/>
</dbReference>
<dbReference type="PANTHER" id="PTHR43790">
    <property type="entry name" value="CARBOHYDRATE TRANSPORT ATP-BINDING PROTEIN MG119-RELATED"/>
    <property type="match status" value="1"/>
</dbReference>
<dbReference type="PANTHER" id="PTHR43790:SF3">
    <property type="entry name" value="D-ALLOSE IMPORT ATP-BINDING PROTEIN ALSA-RELATED"/>
    <property type="match status" value="1"/>
</dbReference>
<dbReference type="Pfam" id="PF00005">
    <property type="entry name" value="ABC_tran"/>
    <property type="match status" value="2"/>
</dbReference>
<dbReference type="SMART" id="SM00382">
    <property type="entry name" value="AAA"/>
    <property type="match status" value="2"/>
</dbReference>
<dbReference type="SUPFAM" id="SSF52540">
    <property type="entry name" value="P-loop containing nucleoside triphosphate hydrolases"/>
    <property type="match status" value="2"/>
</dbReference>
<dbReference type="PROSITE" id="PS00211">
    <property type="entry name" value="ABC_TRANSPORTER_1"/>
    <property type="match status" value="2"/>
</dbReference>
<dbReference type="PROSITE" id="PS50893">
    <property type="entry name" value="ABC_TRANSPORTER_2"/>
    <property type="match status" value="2"/>
</dbReference>
<dbReference type="PROSITE" id="PS51254">
    <property type="entry name" value="RBSA"/>
    <property type="match status" value="1"/>
</dbReference>
<feature type="chain" id="PRO_0000261077" description="Ribose import ATP-binding protein RbsA">
    <location>
        <begin position="1"/>
        <end position="504"/>
    </location>
</feature>
<feature type="domain" description="ABC transporter 1" evidence="1">
    <location>
        <begin position="6"/>
        <end position="242"/>
    </location>
</feature>
<feature type="domain" description="ABC transporter 2" evidence="1">
    <location>
        <begin position="252"/>
        <end position="495"/>
    </location>
</feature>
<feature type="binding site" evidence="1">
    <location>
        <begin position="38"/>
        <end position="45"/>
    </location>
    <ligand>
        <name>ATP</name>
        <dbReference type="ChEBI" id="CHEBI:30616"/>
    </ligand>
</feature>
<reference key="1">
    <citation type="journal article" date="2005" name="Science">
        <title>Life at depth: Photobacterium profundum genome sequence and expression analysis.</title>
        <authorList>
            <person name="Vezzi A."/>
            <person name="Campanaro S."/>
            <person name="D'Angelo M."/>
            <person name="Simonato F."/>
            <person name="Vitulo N."/>
            <person name="Lauro F.M."/>
            <person name="Cestaro A."/>
            <person name="Malacrida G."/>
            <person name="Simionati B."/>
            <person name="Cannata N."/>
            <person name="Romualdi C."/>
            <person name="Bartlett D.H."/>
            <person name="Valle G."/>
        </authorList>
    </citation>
    <scope>NUCLEOTIDE SEQUENCE [LARGE SCALE GENOMIC DNA]</scope>
    <source>
        <strain>ATCC BAA-1253 / SS9</strain>
    </source>
</reference>
<sequence>MNQPILELKGIEKAFPGVKALDNACLNVYPGKVMALMGENGAGKSTLMKSLTGIYAMDAGEIRYQGKAVNFDGPRHSQEAGISIIHQELNLIPELTIAENIFLGREKTNAFGGIKWAEMFREADDLLKRLNVKHHSRQLLGELSLGEQQMVEIAKALSFKSQVIIMDEPTDALTDTETESLFKVINELRAEGCGIVYISHRLKEIFEICDDITVLRDGKFIGERAVADTDEDGLIEMMVGRRLDEQYPRIDVRHGETCLEVTNLTGAGVNNVSFKLDRGEILGVSGLMGAGRSELMKVIYGALKRESGDIKLNGKTINPVTPQDGLANGIAYISEDRKGDGLVLGLSVKENMSLCSLEQLSKGVQLKHYEEVTAVEDFIRLFNIKTPTRDQIIGNLSGGNQQKVAIAKGLMTRPKVLILDEPTRGVDVGAKKEIYQLINQFKAEGMSIILVSSEMPEVLGMSDRIIVMHEGRISGEFMAADANQEKLLACAVGKTTEQNNEVAA</sequence>
<gene>
    <name evidence="1" type="primary">rbsA</name>
    <name type="ordered locus">PBPRB1557</name>
</gene>
<comment type="function">
    <text evidence="1">Part of the ABC transporter complex RbsABC involved in ribose import. Responsible for energy coupling to the transport system.</text>
</comment>
<comment type="catalytic activity">
    <reaction evidence="1">
        <text>D-ribose(out) + ATP + H2O = D-ribose(in) + ADP + phosphate + H(+)</text>
        <dbReference type="Rhea" id="RHEA:29903"/>
        <dbReference type="ChEBI" id="CHEBI:15377"/>
        <dbReference type="ChEBI" id="CHEBI:15378"/>
        <dbReference type="ChEBI" id="CHEBI:30616"/>
        <dbReference type="ChEBI" id="CHEBI:43474"/>
        <dbReference type="ChEBI" id="CHEBI:47013"/>
        <dbReference type="ChEBI" id="CHEBI:456216"/>
        <dbReference type="EC" id="7.5.2.7"/>
    </reaction>
</comment>
<comment type="subunit">
    <text evidence="1">The complex is composed of an ATP-binding protein (RbsA), two transmembrane proteins (RbsC) and a solute-binding protein (RbsB).</text>
</comment>
<comment type="subcellular location">
    <subcellularLocation>
        <location evidence="1">Cell inner membrane</location>
        <topology evidence="1">Peripheral membrane protein</topology>
    </subcellularLocation>
</comment>
<comment type="similarity">
    <text evidence="1">Belongs to the ABC transporter superfamily. Ribose importer (TC 3.A.1.2.1) family.</text>
</comment>
<organism>
    <name type="scientific">Photobacterium profundum (strain SS9)</name>
    <dbReference type="NCBI Taxonomy" id="298386"/>
    <lineage>
        <taxon>Bacteria</taxon>
        <taxon>Pseudomonadati</taxon>
        <taxon>Pseudomonadota</taxon>
        <taxon>Gammaproteobacteria</taxon>
        <taxon>Vibrionales</taxon>
        <taxon>Vibrionaceae</taxon>
        <taxon>Photobacterium</taxon>
    </lineage>
</organism>
<keyword id="KW-0067">ATP-binding</keyword>
<keyword id="KW-0997">Cell inner membrane</keyword>
<keyword id="KW-1003">Cell membrane</keyword>
<keyword id="KW-0472">Membrane</keyword>
<keyword id="KW-0547">Nucleotide-binding</keyword>
<keyword id="KW-1185">Reference proteome</keyword>
<keyword id="KW-0677">Repeat</keyword>
<keyword id="KW-0762">Sugar transport</keyword>
<keyword id="KW-1278">Translocase</keyword>
<keyword id="KW-0813">Transport</keyword>
<protein>
    <recommendedName>
        <fullName evidence="1">Ribose import ATP-binding protein RbsA</fullName>
        <ecNumber evidence="1">7.5.2.7</ecNumber>
    </recommendedName>
</protein>
<name>RBSA_PHOPR</name>
<proteinExistence type="inferred from homology"/>
<evidence type="ECO:0000255" key="1">
    <source>
        <dbReference type="HAMAP-Rule" id="MF_01716"/>
    </source>
</evidence>
<accession>Q6LH11</accession>